<sequence length="454" mass="49513">MHSTDTIVAQATPPGRGGVGILRVSGPKAAVVAQTILGKVPKPRYADYLPFRNEDNSVLDQGIALFFPNPNSFTGEDVLELQGHGGPIILDLLLKRILQIPGIRIAKPGEFSERAFLNDKLDLAQAEAIADLIDASSEQAARSAINSLQGAFSSHINEMVESLTNLRIYVEAAIDFPDEEIDFLSDGVIEGKLNTVISQLDDVRTQARQGSLLREGMKVVIAGRPNAGKSSLLNALAGREAAIVTDIAGTTRDVLREHIHIDGMPLHIIDTAGLREASDEVERIGIERAWQEIEQADRVLFMVDSTTTEATTPEEIWPEFMARLPSTLPVTVIRNKSDLTGEPAEITSQGDYPMIRLSARDGMGIELLRSHLKEAMGFNSNTEGGFLARRRHLQALNTAAEHLQQGYQQLVYAKSGELLAEELRLAQQALSEITGEFTSDDLLGRIFSSFCIGK</sequence>
<dbReference type="EC" id="3.6.-.-" evidence="1"/>
<dbReference type="EMBL" id="AM942759">
    <property type="protein sequence ID" value="CAR46143.1"/>
    <property type="molecule type" value="Genomic_DNA"/>
</dbReference>
<dbReference type="RefSeq" id="WP_012368638.1">
    <property type="nucleotide sequence ID" value="NC_010554.1"/>
</dbReference>
<dbReference type="SMR" id="B4F0U0"/>
<dbReference type="EnsemblBacteria" id="CAR46143">
    <property type="protein sequence ID" value="CAR46143"/>
    <property type="gene ID" value="PMI3127"/>
</dbReference>
<dbReference type="GeneID" id="6801481"/>
<dbReference type="KEGG" id="pmr:PMI3127"/>
<dbReference type="PATRIC" id="fig|529507.6.peg.3055"/>
<dbReference type="eggNOG" id="COG0486">
    <property type="taxonomic scope" value="Bacteria"/>
</dbReference>
<dbReference type="HOGENOM" id="CLU_019624_4_1_6"/>
<dbReference type="Proteomes" id="UP000008319">
    <property type="component" value="Chromosome"/>
</dbReference>
<dbReference type="GO" id="GO:0005829">
    <property type="term" value="C:cytosol"/>
    <property type="evidence" value="ECO:0007669"/>
    <property type="project" value="TreeGrafter"/>
</dbReference>
<dbReference type="GO" id="GO:0005525">
    <property type="term" value="F:GTP binding"/>
    <property type="evidence" value="ECO:0007669"/>
    <property type="project" value="UniProtKB-UniRule"/>
</dbReference>
<dbReference type="GO" id="GO:0003924">
    <property type="term" value="F:GTPase activity"/>
    <property type="evidence" value="ECO:0007669"/>
    <property type="project" value="UniProtKB-UniRule"/>
</dbReference>
<dbReference type="GO" id="GO:0046872">
    <property type="term" value="F:metal ion binding"/>
    <property type="evidence" value="ECO:0007669"/>
    <property type="project" value="UniProtKB-KW"/>
</dbReference>
<dbReference type="GO" id="GO:0030488">
    <property type="term" value="P:tRNA methylation"/>
    <property type="evidence" value="ECO:0007669"/>
    <property type="project" value="TreeGrafter"/>
</dbReference>
<dbReference type="GO" id="GO:0002098">
    <property type="term" value="P:tRNA wobble uridine modification"/>
    <property type="evidence" value="ECO:0007669"/>
    <property type="project" value="TreeGrafter"/>
</dbReference>
<dbReference type="CDD" id="cd04164">
    <property type="entry name" value="trmE"/>
    <property type="match status" value="1"/>
</dbReference>
<dbReference type="CDD" id="cd14858">
    <property type="entry name" value="TrmE_N"/>
    <property type="match status" value="1"/>
</dbReference>
<dbReference type="FunFam" id="3.30.1360.120:FF:000001">
    <property type="entry name" value="tRNA modification GTPase MnmE"/>
    <property type="match status" value="1"/>
</dbReference>
<dbReference type="FunFam" id="3.40.50.300:FF:000249">
    <property type="entry name" value="tRNA modification GTPase MnmE"/>
    <property type="match status" value="1"/>
</dbReference>
<dbReference type="Gene3D" id="3.40.50.300">
    <property type="entry name" value="P-loop containing nucleotide triphosphate hydrolases"/>
    <property type="match status" value="1"/>
</dbReference>
<dbReference type="Gene3D" id="3.30.1360.120">
    <property type="entry name" value="Probable tRNA modification gtpase trme, domain 1"/>
    <property type="match status" value="1"/>
</dbReference>
<dbReference type="Gene3D" id="1.20.120.430">
    <property type="entry name" value="tRNA modification GTPase MnmE domain 2"/>
    <property type="match status" value="1"/>
</dbReference>
<dbReference type="HAMAP" id="MF_00379">
    <property type="entry name" value="GTPase_MnmE"/>
    <property type="match status" value="1"/>
</dbReference>
<dbReference type="InterPro" id="IPR031168">
    <property type="entry name" value="G_TrmE"/>
</dbReference>
<dbReference type="InterPro" id="IPR006073">
    <property type="entry name" value="GTP-bd"/>
</dbReference>
<dbReference type="InterPro" id="IPR018948">
    <property type="entry name" value="GTP-bd_TrmE_N"/>
</dbReference>
<dbReference type="InterPro" id="IPR004520">
    <property type="entry name" value="GTPase_MnmE"/>
</dbReference>
<dbReference type="InterPro" id="IPR027368">
    <property type="entry name" value="MnmE_dom2"/>
</dbReference>
<dbReference type="InterPro" id="IPR025867">
    <property type="entry name" value="MnmE_helical"/>
</dbReference>
<dbReference type="InterPro" id="IPR027417">
    <property type="entry name" value="P-loop_NTPase"/>
</dbReference>
<dbReference type="InterPro" id="IPR005225">
    <property type="entry name" value="Small_GTP-bd"/>
</dbReference>
<dbReference type="InterPro" id="IPR027266">
    <property type="entry name" value="TrmE/GcvT_dom1"/>
</dbReference>
<dbReference type="NCBIfam" id="TIGR00450">
    <property type="entry name" value="mnmE_trmE_thdF"/>
    <property type="match status" value="1"/>
</dbReference>
<dbReference type="NCBIfam" id="NF003661">
    <property type="entry name" value="PRK05291.1-3"/>
    <property type="match status" value="1"/>
</dbReference>
<dbReference type="NCBIfam" id="TIGR00231">
    <property type="entry name" value="small_GTP"/>
    <property type="match status" value="1"/>
</dbReference>
<dbReference type="PANTHER" id="PTHR42714">
    <property type="entry name" value="TRNA MODIFICATION GTPASE GTPBP3"/>
    <property type="match status" value="1"/>
</dbReference>
<dbReference type="PANTHER" id="PTHR42714:SF2">
    <property type="entry name" value="TRNA MODIFICATION GTPASE GTPBP3, MITOCHONDRIAL"/>
    <property type="match status" value="1"/>
</dbReference>
<dbReference type="Pfam" id="PF01926">
    <property type="entry name" value="MMR_HSR1"/>
    <property type="match status" value="1"/>
</dbReference>
<dbReference type="Pfam" id="PF12631">
    <property type="entry name" value="MnmE_helical"/>
    <property type="match status" value="1"/>
</dbReference>
<dbReference type="Pfam" id="PF10396">
    <property type="entry name" value="TrmE_N"/>
    <property type="match status" value="1"/>
</dbReference>
<dbReference type="SUPFAM" id="SSF52540">
    <property type="entry name" value="P-loop containing nucleoside triphosphate hydrolases"/>
    <property type="match status" value="1"/>
</dbReference>
<dbReference type="SUPFAM" id="SSF116878">
    <property type="entry name" value="TrmE connector domain"/>
    <property type="match status" value="1"/>
</dbReference>
<dbReference type="PROSITE" id="PS51709">
    <property type="entry name" value="G_TRME"/>
    <property type="match status" value="1"/>
</dbReference>
<keyword id="KW-0963">Cytoplasm</keyword>
<keyword id="KW-0342">GTP-binding</keyword>
<keyword id="KW-0378">Hydrolase</keyword>
<keyword id="KW-0460">Magnesium</keyword>
<keyword id="KW-0479">Metal-binding</keyword>
<keyword id="KW-0547">Nucleotide-binding</keyword>
<keyword id="KW-0630">Potassium</keyword>
<keyword id="KW-1185">Reference proteome</keyword>
<keyword id="KW-0819">tRNA processing</keyword>
<feature type="chain" id="PRO_1000197058" description="tRNA modification GTPase MnmE">
    <location>
        <begin position="1"/>
        <end position="454"/>
    </location>
</feature>
<feature type="domain" description="TrmE-type G">
    <location>
        <begin position="216"/>
        <end position="377"/>
    </location>
</feature>
<feature type="binding site" evidence="1">
    <location>
        <position position="23"/>
    </location>
    <ligand>
        <name>(6S)-5-formyl-5,6,7,8-tetrahydrofolate</name>
        <dbReference type="ChEBI" id="CHEBI:57457"/>
    </ligand>
</feature>
<feature type="binding site" evidence="1">
    <location>
        <position position="80"/>
    </location>
    <ligand>
        <name>(6S)-5-formyl-5,6,7,8-tetrahydrofolate</name>
        <dbReference type="ChEBI" id="CHEBI:57457"/>
    </ligand>
</feature>
<feature type="binding site" evidence="1">
    <location>
        <position position="120"/>
    </location>
    <ligand>
        <name>(6S)-5-formyl-5,6,7,8-tetrahydrofolate</name>
        <dbReference type="ChEBI" id="CHEBI:57457"/>
    </ligand>
</feature>
<feature type="binding site" evidence="1">
    <location>
        <begin position="226"/>
        <end position="231"/>
    </location>
    <ligand>
        <name>GTP</name>
        <dbReference type="ChEBI" id="CHEBI:37565"/>
    </ligand>
</feature>
<feature type="binding site" evidence="1">
    <location>
        <position position="226"/>
    </location>
    <ligand>
        <name>K(+)</name>
        <dbReference type="ChEBI" id="CHEBI:29103"/>
    </ligand>
</feature>
<feature type="binding site" evidence="1">
    <location>
        <position position="230"/>
    </location>
    <ligand>
        <name>Mg(2+)</name>
        <dbReference type="ChEBI" id="CHEBI:18420"/>
    </ligand>
</feature>
<feature type="binding site" evidence="1">
    <location>
        <begin position="245"/>
        <end position="251"/>
    </location>
    <ligand>
        <name>GTP</name>
        <dbReference type="ChEBI" id="CHEBI:37565"/>
    </ligand>
</feature>
<feature type="binding site" evidence="1">
    <location>
        <position position="245"/>
    </location>
    <ligand>
        <name>K(+)</name>
        <dbReference type="ChEBI" id="CHEBI:29103"/>
    </ligand>
</feature>
<feature type="binding site" evidence="1">
    <location>
        <position position="247"/>
    </location>
    <ligand>
        <name>K(+)</name>
        <dbReference type="ChEBI" id="CHEBI:29103"/>
    </ligand>
</feature>
<feature type="binding site" evidence="1">
    <location>
        <position position="250"/>
    </location>
    <ligand>
        <name>K(+)</name>
        <dbReference type="ChEBI" id="CHEBI:29103"/>
    </ligand>
</feature>
<feature type="binding site" evidence="1">
    <location>
        <position position="251"/>
    </location>
    <ligand>
        <name>Mg(2+)</name>
        <dbReference type="ChEBI" id="CHEBI:18420"/>
    </ligand>
</feature>
<feature type="binding site" evidence="1">
    <location>
        <begin position="270"/>
        <end position="273"/>
    </location>
    <ligand>
        <name>GTP</name>
        <dbReference type="ChEBI" id="CHEBI:37565"/>
    </ligand>
</feature>
<feature type="binding site" evidence="1">
    <location>
        <begin position="358"/>
        <end position="360"/>
    </location>
    <ligand>
        <name>GTP</name>
        <dbReference type="ChEBI" id="CHEBI:37565"/>
    </ligand>
</feature>
<feature type="binding site" evidence="1">
    <location>
        <position position="454"/>
    </location>
    <ligand>
        <name>(6S)-5-formyl-5,6,7,8-tetrahydrofolate</name>
        <dbReference type="ChEBI" id="CHEBI:57457"/>
    </ligand>
</feature>
<reference key="1">
    <citation type="journal article" date="2008" name="J. Bacteriol.">
        <title>Complete genome sequence of uropathogenic Proteus mirabilis, a master of both adherence and motility.</title>
        <authorList>
            <person name="Pearson M.M."/>
            <person name="Sebaihia M."/>
            <person name="Churcher C."/>
            <person name="Quail M.A."/>
            <person name="Seshasayee A.S."/>
            <person name="Luscombe N.M."/>
            <person name="Abdellah Z."/>
            <person name="Arrosmith C."/>
            <person name="Atkin B."/>
            <person name="Chillingworth T."/>
            <person name="Hauser H."/>
            <person name="Jagels K."/>
            <person name="Moule S."/>
            <person name="Mungall K."/>
            <person name="Norbertczak H."/>
            <person name="Rabbinowitsch E."/>
            <person name="Walker D."/>
            <person name="Whithead S."/>
            <person name="Thomson N.R."/>
            <person name="Rather P.N."/>
            <person name="Parkhill J."/>
            <person name="Mobley H.L.T."/>
        </authorList>
    </citation>
    <scope>NUCLEOTIDE SEQUENCE [LARGE SCALE GENOMIC DNA]</scope>
    <source>
        <strain>HI4320</strain>
    </source>
</reference>
<name>MNME_PROMH</name>
<proteinExistence type="inferred from homology"/>
<accession>B4F0U0</accession>
<organism>
    <name type="scientific">Proteus mirabilis (strain HI4320)</name>
    <dbReference type="NCBI Taxonomy" id="529507"/>
    <lineage>
        <taxon>Bacteria</taxon>
        <taxon>Pseudomonadati</taxon>
        <taxon>Pseudomonadota</taxon>
        <taxon>Gammaproteobacteria</taxon>
        <taxon>Enterobacterales</taxon>
        <taxon>Morganellaceae</taxon>
        <taxon>Proteus</taxon>
    </lineage>
</organism>
<evidence type="ECO:0000255" key="1">
    <source>
        <dbReference type="HAMAP-Rule" id="MF_00379"/>
    </source>
</evidence>
<protein>
    <recommendedName>
        <fullName evidence="1">tRNA modification GTPase MnmE</fullName>
        <ecNumber evidence="1">3.6.-.-</ecNumber>
    </recommendedName>
</protein>
<comment type="function">
    <text evidence="1">Exhibits a very high intrinsic GTPase hydrolysis rate. Involved in the addition of a carboxymethylaminomethyl (cmnm) group at the wobble position (U34) of certain tRNAs, forming tRNA-cmnm(5)s(2)U34.</text>
</comment>
<comment type="cofactor">
    <cofactor evidence="1">
        <name>K(+)</name>
        <dbReference type="ChEBI" id="CHEBI:29103"/>
    </cofactor>
    <text evidence="1">Binds 1 potassium ion per subunit.</text>
</comment>
<comment type="subunit">
    <text evidence="1">Homodimer. Heterotetramer of two MnmE and two MnmG subunits.</text>
</comment>
<comment type="subcellular location">
    <subcellularLocation>
        <location evidence="1">Cytoplasm</location>
    </subcellularLocation>
</comment>
<comment type="similarity">
    <text evidence="1">Belongs to the TRAFAC class TrmE-Era-EngA-EngB-Septin-like GTPase superfamily. TrmE GTPase family.</text>
</comment>
<gene>
    <name evidence="1" type="primary">mnmE</name>
    <name evidence="1" type="synonym">trmE</name>
    <name type="ordered locus">PMI3127</name>
</gene>